<gene>
    <name evidence="1" type="primary">rplB</name>
    <name type="ordered locus">LA_0742</name>
</gene>
<accession>Q9XD33</accession>
<name>RL2_LEPIN</name>
<comment type="function">
    <text evidence="1">One of the primary rRNA binding proteins. Required for association of the 30S and 50S subunits to form the 70S ribosome, for tRNA binding and peptide bond formation. It has been suggested to have peptidyltransferase activity; this is somewhat controversial. Makes several contacts with the 16S rRNA in the 70S ribosome.</text>
</comment>
<comment type="subunit">
    <text evidence="1">Part of the 50S ribosomal subunit. Forms a bridge to the 30S subunit in the 70S ribosome.</text>
</comment>
<comment type="similarity">
    <text evidence="1">Belongs to the universal ribosomal protein uL2 family.</text>
</comment>
<dbReference type="EMBL" id="AF115283">
    <property type="protein sequence ID" value="AAD40586.1"/>
    <property type="molecule type" value="Genomic_DNA"/>
</dbReference>
<dbReference type="EMBL" id="AE010300">
    <property type="protein sequence ID" value="AAN47941.1"/>
    <property type="molecule type" value="Genomic_DNA"/>
</dbReference>
<dbReference type="RefSeq" id="NP_710923.1">
    <property type="nucleotide sequence ID" value="NC_004342.2"/>
</dbReference>
<dbReference type="RefSeq" id="WP_000511542.1">
    <property type="nucleotide sequence ID" value="NC_004342.2"/>
</dbReference>
<dbReference type="SMR" id="Q9XD33"/>
<dbReference type="FunCoup" id="Q9XD33">
    <property type="interactions" value="626"/>
</dbReference>
<dbReference type="STRING" id="189518.LA_0742"/>
<dbReference type="PaxDb" id="189518-LA_0742"/>
<dbReference type="EnsemblBacteria" id="AAN47941">
    <property type="protein sequence ID" value="AAN47941"/>
    <property type="gene ID" value="LA_0742"/>
</dbReference>
<dbReference type="GeneID" id="61142744"/>
<dbReference type="KEGG" id="lil:LA_0742"/>
<dbReference type="PATRIC" id="fig|189518.3.peg.747"/>
<dbReference type="HOGENOM" id="CLU_036235_2_1_12"/>
<dbReference type="InParanoid" id="Q9XD33"/>
<dbReference type="OrthoDB" id="9778722at2"/>
<dbReference type="Proteomes" id="UP000001408">
    <property type="component" value="Chromosome I"/>
</dbReference>
<dbReference type="GO" id="GO:0015934">
    <property type="term" value="C:large ribosomal subunit"/>
    <property type="evidence" value="ECO:0007669"/>
    <property type="project" value="InterPro"/>
</dbReference>
<dbReference type="GO" id="GO:0003723">
    <property type="term" value="F:RNA binding"/>
    <property type="evidence" value="ECO:0000318"/>
    <property type="project" value="GO_Central"/>
</dbReference>
<dbReference type="GO" id="GO:0019843">
    <property type="term" value="F:rRNA binding"/>
    <property type="evidence" value="ECO:0007669"/>
    <property type="project" value="UniProtKB-UniRule"/>
</dbReference>
<dbReference type="GO" id="GO:0003735">
    <property type="term" value="F:structural constituent of ribosome"/>
    <property type="evidence" value="ECO:0000318"/>
    <property type="project" value="GO_Central"/>
</dbReference>
<dbReference type="GO" id="GO:0016740">
    <property type="term" value="F:transferase activity"/>
    <property type="evidence" value="ECO:0007669"/>
    <property type="project" value="InterPro"/>
</dbReference>
<dbReference type="GO" id="GO:0002181">
    <property type="term" value="P:cytoplasmic translation"/>
    <property type="evidence" value="ECO:0000318"/>
    <property type="project" value="GO_Central"/>
</dbReference>
<dbReference type="FunFam" id="2.30.30.30:FF:000001">
    <property type="entry name" value="50S ribosomal protein L2"/>
    <property type="match status" value="1"/>
</dbReference>
<dbReference type="FunFam" id="2.40.50.140:FF:000003">
    <property type="entry name" value="50S ribosomal protein L2"/>
    <property type="match status" value="1"/>
</dbReference>
<dbReference type="FunFam" id="4.10.950.10:FF:000001">
    <property type="entry name" value="50S ribosomal protein L2"/>
    <property type="match status" value="1"/>
</dbReference>
<dbReference type="Gene3D" id="2.30.30.30">
    <property type="match status" value="1"/>
</dbReference>
<dbReference type="Gene3D" id="2.40.50.140">
    <property type="entry name" value="Nucleic acid-binding proteins"/>
    <property type="match status" value="1"/>
</dbReference>
<dbReference type="Gene3D" id="4.10.950.10">
    <property type="entry name" value="Ribosomal protein L2, domain 3"/>
    <property type="match status" value="1"/>
</dbReference>
<dbReference type="HAMAP" id="MF_01320_B">
    <property type="entry name" value="Ribosomal_uL2_B"/>
    <property type="match status" value="1"/>
</dbReference>
<dbReference type="InterPro" id="IPR012340">
    <property type="entry name" value="NA-bd_OB-fold"/>
</dbReference>
<dbReference type="InterPro" id="IPR014722">
    <property type="entry name" value="Rib_uL2_dom2"/>
</dbReference>
<dbReference type="InterPro" id="IPR002171">
    <property type="entry name" value="Ribosomal_uL2"/>
</dbReference>
<dbReference type="InterPro" id="IPR005880">
    <property type="entry name" value="Ribosomal_uL2_bac/org-type"/>
</dbReference>
<dbReference type="InterPro" id="IPR022669">
    <property type="entry name" value="Ribosomal_uL2_C"/>
</dbReference>
<dbReference type="InterPro" id="IPR022671">
    <property type="entry name" value="Ribosomal_uL2_CS"/>
</dbReference>
<dbReference type="InterPro" id="IPR014726">
    <property type="entry name" value="Ribosomal_uL2_dom3"/>
</dbReference>
<dbReference type="InterPro" id="IPR022666">
    <property type="entry name" value="Ribosomal_uL2_RNA-bd_dom"/>
</dbReference>
<dbReference type="InterPro" id="IPR008991">
    <property type="entry name" value="Translation_prot_SH3-like_sf"/>
</dbReference>
<dbReference type="NCBIfam" id="TIGR01171">
    <property type="entry name" value="rplB_bact"/>
    <property type="match status" value="1"/>
</dbReference>
<dbReference type="PANTHER" id="PTHR13691:SF5">
    <property type="entry name" value="LARGE RIBOSOMAL SUBUNIT PROTEIN UL2M"/>
    <property type="match status" value="1"/>
</dbReference>
<dbReference type="PANTHER" id="PTHR13691">
    <property type="entry name" value="RIBOSOMAL PROTEIN L2"/>
    <property type="match status" value="1"/>
</dbReference>
<dbReference type="Pfam" id="PF00181">
    <property type="entry name" value="Ribosomal_L2"/>
    <property type="match status" value="1"/>
</dbReference>
<dbReference type="Pfam" id="PF03947">
    <property type="entry name" value="Ribosomal_L2_C"/>
    <property type="match status" value="1"/>
</dbReference>
<dbReference type="PIRSF" id="PIRSF002158">
    <property type="entry name" value="Ribosomal_L2"/>
    <property type="match status" value="1"/>
</dbReference>
<dbReference type="SMART" id="SM01383">
    <property type="entry name" value="Ribosomal_L2"/>
    <property type="match status" value="1"/>
</dbReference>
<dbReference type="SMART" id="SM01382">
    <property type="entry name" value="Ribosomal_L2_C"/>
    <property type="match status" value="1"/>
</dbReference>
<dbReference type="SUPFAM" id="SSF50249">
    <property type="entry name" value="Nucleic acid-binding proteins"/>
    <property type="match status" value="1"/>
</dbReference>
<dbReference type="SUPFAM" id="SSF50104">
    <property type="entry name" value="Translation proteins SH3-like domain"/>
    <property type="match status" value="1"/>
</dbReference>
<dbReference type="PROSITE" id="PS00467">
    <property type="entry name" value="RIBOSOMAL_L2"/>
    <property type="match status" value="1"/>
</dbReference>
<protein>
    <recommendedName>
        <fullName evidence="1">Large ribosomal subunit protein uL2</fullName>
    </recommendedName>
    <alternativeName>
        <fullName evidence="3">50S ribosomal protein L2</fullName>
    </alternativeName>
</protein>
<reference key="1">
    <citation type="journal article" date="2000" name="FEMS Microbiol. Lett.">
        <title>Characterization of the Leptospira interrogans S10-spc-alpha operon.</title>
        <authorList>
            <person name="Zuerner R.L."/>
            <person name="Hartskeerl R.A."/>
            <person name="van de Kemp H."/>
            <person name="Bal A.E."/>
        </authorList>
    </citation>
    <scope>NUCLEOTIDE SEQUENCE [GENOMIC DNA]</scope>
    <source>
        <strain>Lai / Serogroup Icterohaemorrhagiae / Serovar lai</strain>
    </source>
</reference>
<reference key="2">
    <citation type="journal article" date="2003" name="Nature">
        <title>Unique physiological and pathogenic features of Leptospira interrogans revealed by whole-genome sequencing.</title>
        <authorList>
            <person name="Ren S.-X."/>
            <person name="Fu G."/>
            <person name="Jiang X.-G."/>
            <person name="Zeng R."/>
            <person name="Miao Y.-G."/>
            <person name="Xu H."/>
            <person name="Zhang Y.-X."/>
            <person name="Xiong H."/>
            <person name="Lu G."/>
            <person name="Lu L.-F."/>
            <person name="Jiang H.-Q."/>
            <person name="Jia J."/>
            <person name="Tu Y.-F."/>
            <person name="Jiang J.-X."/>
            <person name="Gu W.-Y."/>
            <person name="Zhang Y.-Q."/>
            <person name="Cai Z."/>
            <person name="Sheng H.-H."/>
            <person name="Yin H.-F."/>
            <person name="Zhang Y."/>
            <person name="Zhu G.-F."/>
            <person name="Wan M."/>
            <person name="Huang H.-L."/>
            <person name="Qian Z."/>
            <person name="Wang S.-Y."/>
            <person name="Ma W."/>
            <person name="Yao Z.-J."/>
            <person name="Shen Y."/>
            <person name="Qiang B.-Q."/>
            <person name="Xia Q.-C."/>
            <person name="Guo X.-K."/>
            <person name="Danchin A."/>
            <person name="Saint Girons I."/>
            <person name="Somerville R.L."/>
            <person name="Wen Y.-M."/>
            <person name="Shi M.-H."/>
            <person name="Chen Z."/>
            <person name="Xu J.-G."/>
            <person name="Zhao G.-P."/>
        </authorList>
    </citation>
    <scope>NUCLEOTIDE SEQUENCE [LARGE SCALE GENOMIC DNA]</scope>
    <source>
        <strain>56601</strain>
    </source>
</reference>
<keyword id="KW-1185">Reference proteome</keyword>
<keyword id="KW-0687">Ribonucleoprotein</keyword>
<keyword id="KW-0689">Ribosomal protein</keyword>
<keyword id="KW-0694">RNA-binding</keyword>
<keyword id="KW-0699">rRNA-binding</keyword>
<proteinExistence type="inferred from homology"/>
<organism>
    <name type="scientific">Leptospira interrogans serogroup Icterohaemorrhagiae serovar Lai (strain 56601)</name>
    <dbReference type="NCBI Taxonomy" id="189518"/>
    <lineage>
        <taxon>Bacteria</taxon>
        <taxon>Pseudomonadati</taxon>
        <taxon>Spirochaetota</taxon>
        <taxon>Spirochaetia</taxon>
        <taxon>Leptospirales</taxon>
        <taxon>Leptospiraceae</taxon>
        <taxon>Leptospira</taxon>
    </lineage>
</organism>
<feature type="chain" id="PRO_0000129574" description="Large ribosomal subunit protein uL2">
    <location>
        <begin position="1"/>
        <end position="279"/>
    </location>
</feature>
<feature type="region of interest" description="Disordered" evidence="2">
    <location>
        <begin position="216"/>
        <end position="279"/>
    </location>
</feature>
<feature type="compositionally biased region" description="Basic residues" evidence="2">
    <location>
        <begin position="270"/>
        <end position="279"/>
    </location>
</feature>
<feature type="sequence conflict" description="In Ref. 1; AAD40586." evidence="3" ref="1">
    <original>A</original>
    <variation>T</variation>
    <location>
        <position position="72"/>
    </location>
</feature>
<evidence type="ECO:0000255" key="1">
    <source>
        <dbReference type="HAMAP-Rule" id="MF_01320"/>
    </source>
</evidence>
<evidence type="ECO:0000256" key="2">
    <source>
        <dbReference type="SAM" id="MobiDB-lite"/>
    </source>
</evidence>
<evidence type="ECO:0000305" key="3"/>
<sequence length="279" mass="30650">MGIKKFKPVTSASRYKSVLDFAEITETEPYKPLTLTLNYKAGRGDGGKIAVRHKGGRVKRKYRIIDFKRRKANIPAVVKSLEYDPNRSAFISLICYKDGEYSYILAPDGIKVGDTVQSGAGSEIKIGNAMPIGKIPPGTNVHNVELQIGKGGQIARTAGSFGTIAGRDGEYILLKLPSSEVRKVHENCYATIGICSNKDHNLVSIGKAGRSRWLGKRPSVRGVVMNPVDHPHGGGEGRTSGGRHPVSPWGQPTKGYKTRRSTRPSDKFIIQKRKRNRNR</sequence>